<gene>
    <name evidence="1" type="primary">mnmG</name>
    <name evidence="1" type="synonym">gidA</name>
    <name type="ordered locus">Fjoh_1003</name>
</gene>
<organism>
    <name type="scientific">Flavobacterium johnsoniae (strain ATCC 17061 / DSM 2064 / JCM 8514 / BCRC 14874 / CCUG 350202 / NBRC 14942 / NCIMB 11054 / UW101)</name>
    <name type="common">Cytophaga johnsonae</name>
    <dbReference type="NCBI Taxonomy" id="376686"/>
    <lineage>
        <taxon>Bacteria</taxon>
        <taxon>Pseudomonadati</taxon>
        <taxon>Bacteroidota</taxon>
        <taxon>Flavobacteriia</taxon>
        <taxon>Flavobacteriales</taxon>
        <taxon>Flavobacteriaceae</taxon>
        <taxon>Flavobacterium</taxon>
    </lineage>
</organism>
<proteinExistence type="inferred from homology"/>
<accession>A5FL86</accession>
<dbReference type="EMBL" id="CP000685">
    <property type="protein sequence ID" value="ABQ04036.1"/>
    <property type="molecule type" value="Genomic_DNA"/>
</dbReference>
<dbReference type="RefSeq" id="WP_012023089.1">
    <property type="nucleotide sequence ID" value="NZ_MUGZ01000034.1"/>
</dbReference>
<dbReference type="SMR" id="A5FL86"/>
<dbReference type="STRING" id="376686.Fjoh_1003"/>
<dbReference type="KEGG" id="fjo:Fjoh_1003"/>
<dbReference type="eggNOG" id="COG0445">
    <property type="taxonomic scope" value="Bacteria"/>
</dbReference>
<dbReference type="HOGENOM" id="CLU_007831_2_2_10"/>
<dbReference type="OrthoDB" id="9815560at2"/>
<dbReference type="Proteomes" id="UP000006694">
    <property type="component" value="Chromosome"/>
</dbReference>
<dbReference type="GO" id="GO:0005829">
    <property type="term" value="C:cytosol"/>
    <property type="evidence" value="ECO:0007669"/>
    <property type="project" value="TreeGrafter"/>
</dbReference>
<dbReference type="GO" id="GO:0050660">
    <property type="term" value="F:flavin adenine dinucleotide binding"/>
    <property type="evidence" value="ECO:0007669"/>
    <property type="project" value="UniProtKB-UniRule"/>
</dbReference>
<dbReference type="GO" id="GO:0030488">
    <property type="term" value="P:tRNA methylation"/>
    <property type="evidence" value="ECO:0007669"/>
    <property type="project" value="TreeGrafter"/>
</dbReference>
<dbReference type="GO" id="GO:0002098">
    <property type="term" value="P:tRNA wobble uridine modification"/>
    <property type="evidence" value="ECO:0007669"/>
    <property type="project" value="InterPro"/>
</dbReference>
<dbReference type="FunFam" id="1.10.150.570:FF:000001">
    <property type="entry name" value="tRNA uridine 5-carboxymethylaminomethyl modification enzyme MnmG"/>
    <property type="match status" value="1"/>
</dbReference>
<dbReference type="FunFam" id="3.50.50.60:FF:000002">
    <property type="entry name" value="tRNA uridine 5-carboxymethylaminomethyl modification enzyme MnmG"/>
    <property type="match status" value="1"/>
</dbReference>
<dbReference type="Gene3D" id="3.50.50.60">
    <property type="entry name" value="FAD/NAD(P)-binding domain"/>
    <property type="match status" value="2"/>
</dbReference>
<dbReference type="Gene3D" id="1.10.150.570">
    <property type="entry name" value="GidA associated domain, C-terminal subdomain"/>
    <property type="match status" value="1"/>
</dbReference>
<dbReference type="Gene3D" id="1.10.10.1800">
    <property type="entry name" value="tRNA uridine 5-carboxymethylaminomethyl modification enzyme MnmG/GidA"/>
    <property type="match status" value="1"/>
</dbReference>
<dbReference type="HAMAP" id="MF_00129">
    <property type="entry name" value="MnmG_GidA"/>
    <property type="match status" value="1"/>
</dbReference>
<dbReference type="InterPro" id="IPR036188">
    <property type="entry name" value="FAD/NAD-bd_sf"/>
</dbReference>
<dbReference type="InterPro" id="IPR049312">
    <property type="entry name" value="GIDA_C_N"/>
</dbReference>
<dbReference type="InterPro" id="IPR004416">
    <property type="entry name" value="MnmG"/>
</dbReference>
<dbReference type="InterPro" id="IPR002218">
    <property type="entry name" value="MnmG-rel"/>
</dbReference>
<dbReference type="InterPro" id="IPR020595">
    <property type="entry name" value="MnmG-rel_CS"/>
</dbReference>
<dbReference type="InterPro" id="IPR026904">
    <property type="entry name" value="MnmG_C"/>
</dbReference>
<dbReference type="InterPro" id="IPR047001">
    <property type="entry name" value="MnmG_C_subdom"/>
</dbReference>
<dbReference type="InterPro" id="IPR044920">
    <property type="entry name" value="MnmG_C_subdom_sf"/>
</dbReference>
<dbReference type="InterPro" id="IPR040131">
    <property type="entry name" value="MnmG_N"/>
</dbReference>
<dbReference type="NCBIfam" id="TIGR00136">
    <property type="entry name" value="mnmG_gidA"/>
    <property type="match status" value="1"/>
</dbReference>
<dbReference type="PANTHER" id="PTHR11806">
    <property type="entry name" value="GLUCOSE INHIBITED DIVISION PROTEIN A"/>
    <property type="match status" value="1"/>
</dbReference>
<dbReference type="PANTHER" id="PTHR11806:SF0">
    <property type="entry name" value="PROTEIN MTO1 HOMOLOG, MITOCHONDRIAL"/>
    <property type="match status" value="1"/>
</dbReference>
<dbReference type="Pfam" id="PF01134">
    <property type="entry name" value="GIDA"/>
    <property type="match status" value="1"/>
</dbReference>
<dbReference type="Pfam" id="PF21680">
    <property type="entry name" value="GIDA_C_1st"/>
    <property type="match status" value="1"/>
</dbReference>
<dbReference type="Pfam" id="PF13932">
    <property type="entry name" value="SAM_GIDA_C"/>
    <property type="match status" value="1"/>
</dbReference>
<dbReference type="SMART" id="SM01228">
    <property type="entry name" value="GIDA_assoc_3"/>
    <property type="match status" value="1"/>
</dbReference>
<dbReference type="SUPFAM" id="SSF51905">
    <property type="entry name" value="FAD/NAD(P)-binding domain"/>
    <property type="match status" value="1"/>
</dbReference>
<dbReference type="PROSITE" id="PS01280">
    <property type="entry name" value="GIDA_1"/>
    <property type="match status" value="1"/>
</dbReference>
<dbReference type="PROSITE" id="PS01281">
    <property type="entry name" value="GIDA_2"/>
    <property type="match status" value="1"/>
</dbReference>
<comment type="function">
    <text evidence="1">NAD-binding protein involved in the addition of a carboxymethylaminomethyl (cmnm) group at the wobble position (U34) of certain tRNAs, forming tRNA-cmnm(5)s(2)U34.</text>
</comment>
<comment type="cofactor">
    <cofactor evidence="1">
        <name>FAD</name>
        <dbReference type="ChEBI" id="CHEBI:57692"/>
    </cofactor>
</comment>
<comment type="subunit">
    <text evidence="1">Homodimer. Heterotetramer of two MnmE and two MnmG subunits.</text>
</comment>
<comment type="subcellular location">
    <subcellularLocation>
        <location evidence="1">Cytoplasm</location>
    </subcellularLocation>
</comment>
<comment type="similarity">
    <text evidence="1">Belongs to the MnmG family.</text>
</comment>
<feature type="chain" id="PRO_0000345272" description="tRNA uridine 5-carboxymethylaminomethyl modification enzyme MnmG">
    <location>
        <begin position="1"/>
        <end position="623"/>
    </location>
</feature>
<feature type="binding site" evidence="1">
    <location>
        <begin position="12"/>
        <end position="17"/>
    </location>
    <ligand>
        <name>FAD</name>
        <dbReference type="ChEBI" id="CHEBI:57692"/>
    </ligand>
</feature>
<feature type="binding site" evidence="1">
    <location>
        <begin position="272"/>
        <end position="286"/>
    </location>
    <ligand>
        <name>NAD(+)</name>
        <dbReference type="ChEBI" id="CHEBI:57540"/>
    </ligand>
</feature>
<keyword id="KW-0963">Cytoplasm</keyword>
<keyword id="KW-0274">FAD</keyword>
<keyword id="KW-0285">Flavoprotein</keyword>
<keyword id="KW-0520">NAD</keyword>
<keyword id="KW-0819">tRNA processing</keyword>
<protein>
    <recommendedName>
        <fullName evidence="1">tRNA uridine 5-carboxymethylaminomethyl modification enzyme MnmG</fullName>
    </recommendedName>
    <alternativeName>
        <fullName evidence="1">Glucose-inhibited division protein A</fullName>
    </alternativeName>
</protein>
<evidence type="ECO:0000255" key="1">
    <source>
        <dbReference type="HAMAP-Rule" id="MF_00129"/>
    </source>
</evidence>
<reference key="1">
    <citation type="journal article" date="2009" name="Appl. Environ. Microbiol.">
        <title>Novel features of the polysaccharide-digesting gliding bacterium Flavobacterium johnsoniae as revealed by genome sequence analysis.</title>
        <authorList>
            <person name="McBride M.J."/>
            <person name="Xie G."/>
            <person name="Martens E.C."/>
            <person name="Lapidus A."/>
            <person name="Henrissat B."/>
            <person name="Rhodes R.G."/>
            <person name="Goltsman E."/>
            <person name="Wang W."/>
            <person name="Xu J."/>
            <person name="Hunnicutt D.W."/>
            <person name="Staroscik A.M."/>
            <person name="Hoover T.R."/>
            <person name="Cheng Y.Q."/>
            <person name="Stein J.L."/>
        </authorList>
    </citation>
    <scope>NUCLEOTIDE SEQUENCE [LARGE SCALE GENOMIC DNA]</scope>
    <source>
        <strain>ATCC 17061 / DSM 2064 / JCM 8514 / BCRC 14874 / CCUG 350202 / NBRC 14942 / NCIMB 11054 / UW101</strain>
    </source>
</reference>
<sequence length="623" mass="69962">MFLEEYDVIVVGAGHAGSEAAAAAANLGSKTLLVTMSLQNIAQMSCNPAMGGIAKGQIVREIDALGGYSGIVSDRTAIQFKMLNKSKGPAMWSPRVQSDRMRFAEEWRMMLEGTPNLDFYQEMVKGLIIENGKIKGIRTSLGVEIRSKSVVLTNGTFLNGLIHIGEKQFGGGRAGESAATGITEDLVKAGFEAGRMKTGTPPRVDGRSLDYSKMNEEKGDAKPDKFSYSDLTKPLTQQRSCYMTYTSLNVHDILREGFDRSPMFNGRIKSLGPRYCPSIEDKINRFADKERHQLFVEPEGWNTCEVYVNGFSTSLPEDIQFKALRSVAGFENVKFFRPGYAIEYDYFPPTQLKHTLETKLVEGLYFAGQINGTTGYEEAASQGLMAGINAHLKVHEKAPLILKRDEAYIGVLIDDLITKGTEEPYRMFTSRAEYRTLLRQDNADFRLTPMSFEIGLASEDRMRRMEHKLNESEKMVAFFKETSVTVAETNPILIEKESAPISQGDKMFKVFSRPQIELEDMLKFEKVDSYIKENNLDEEIVEQAVIQVKYSGYIEKERNNADKLNRLEEVKIPENFDYNKIKSMSIEAKQKLSKIRPVTISQASRISGVSPSDISVLLIYMGR</sequence>
<name>MNMG_FLAJ1</name>